<accession>B9KHZ4</accession>
<sequence length="215" mass="23763">MLGAVGPGALWGFEREIMNLVPMVVEQTSRGERAYDIYSRLLKERIIFITGTVEDNMASLIVAQLVFLEAENPEKDISLYINSPGGVVTAGLSIYDTMQYIKPKVSTLCLGQAASMGALLLAGGEPGMRYALPNSRIMVHQPSGGFRGQATDIEIHAREILEIKRRLNEIYVKHTGKSLEEIESSMERDNFMVAEKAKDFGIVDKVIDKRGGEQI</sequence>
<comment type="function">
    <text evidence="1">Cleaves peptides in various proteins in a process that requires ATP hydrolysis. Has a chymotrypsin-like activity. Plays a major role in the degradation of misfolded proteins.</text>
</comment>
<comment type="catalytic activity">
    <reaction evidence="1">
        <text>Hydrolysis of proteins to small peptides in the presence of ATP and magnesium. alpha-casein is the usual test substrate. In the absence of ATP, only oligopeptides shorter than five residues are hydrolyzed (such as succinyl-Leu-Tyr-|-NHMec, and Leu-Tyr-Leu-|-Tyr-Trp, in which cleavage of the -Tyr-|-Leu- and -Tyr-|-Trp bonds also occurs).</text>
        <dbReference type="EC" id="3.4.21.92"/>
    </reaction>
</comment>
<comment type="subunit">
    <text evidence="1">Fourteen ClpP subunits assemble into 2 heptameric rings which stack back to back to give a disk-like structure with a central cavity, resembling the structure of eukaryotic proteasomes.</text>
</comment>
<comment type="subcellular location">
    <subcellularLocation>
        <location evidence="1">Cytoplasm</location>
    </subcellularLocation>
</comment>
<comment type="similarity">
    <text evidence="1">Belongs to the peptidase S14 family.</text>
</comment>
<organism>
    <name type="scientific">Anaplasma marginale (strain Florida)</name>
    <dbReference type="NCBI Taxonomy" id="320483"/>
    <lineage>
        <taxon>Bacteria</taxon>
        <taxon>Pseudomonadati</taxon>
        <taxon>Pseudomonadota</taxon>
        <taxon>Alphaproteobacteria</taxon>
        <taxon>Rickettsiales</taxon>
        <taxon>Anaplasmataceae</taxon>
        <taxon>Anaplasma</taxon>
    </lineage>
</organism>
<keyword id="KW-0963">Cytoplasm</keyword>
<keyword id="KW-0378">Hydrolase</keyword>
<keyword id="KW-0645">Protease</keyword>
<keyword id="KW-1185">Reference proteome</keyword>
<keyword id="KW-0720">Serine protease</keyword>
<proteinExistence type="inferred from homology"/>
<gene>
    <name evidence="1" type="primary">clpP</name>
    <name type="ordered locus">AMF_230</name>
</gene>
<protein>
    <recommendedName>
        <fullName evidence="1">ATP-dependent Clp protease proteolytic subunit</fullName>
        <ecNumber evidence="1">3.4.21.92</ecNumber>
    </recommendedName>
    <alternativeName>
        <fullName evidence="1">Endopeptidase Clp</fullName>
    </alternativeName>
</protein>
<reference key="1">
    <citation type="journal article" date="2009" name="BMC Genomics">
        <title>Conservation in the face of diversity: multistrain analysis of an intracellular bacterium.</title>
        <authorList>
            <person name="Dark M.J."/>
            <person name="Herndon D.R."/>
            <person name="Kappmeyer L.S."/>
            <person name="Gonzales M.P."/>
            <person name="Nordeen E."/>
            <person name="Palmer G.H."/>
            <person name="Knowles D.P. Jr."/>
            <person name="Brayton K.A."/>
        </authorList>
    </citation>
    <scope>NUCLEOTIDE SEQUENCE [LARGE SCALE GENOMIC DNA]</scope>
    <source>
        <strain>Florida</strain>
    </source>
</reference>
<dbReference type="EC" id="3.4.21.92" evidence="1"/>
<dbReference type="EMBL" id="CP001079">
    <property type="protein sequence ID" value="ACM49106.1"/>
    <property type="molecule type" value="Genomic_DNA"/>
</dbReference>
<dbReference type="SMR" id="B9KHZ4"/>
<dbReference type="STRING" id="320483.AMF_230"/>
<dbReference type="MEROPS" id="S14.001"/>
<dbReference type="KEGG" id="amf:AMF_230"/>
<dbReference type="eggNOG" id="COG0740">
    <property type="taxonomic scope" value="Bacteria"/>
</dbReference>
<dbReference type="HOGENOM" id="CLU_058707_3_2_5"/>
<dbReference type="Proteomes" id="UP000007307">
    <property type="component" value="Chromosome"/>
</dbReference>
<dbReference type="GO" id="GO:0005737">
    <property type="term" value="C:cytoplasm"/>
    <property type="evidence" value="ECO:0007669"/>
    <property type="project" value="UniProtKB-SubCell"/>
</dbReference>
<dbReference type="GO" id="GO:0009368">
    <property type="term" value="C:endopeptidase Clp complex"/>
    <property type="evidence" value="ECO:0007669"/>
    <property type="project" value="TreeGrafter"/>
</dbReference>
<dbReference type="GO" id="GO:0004176">
    <property type="term" value="F:ATP-dependent peptidase activity"/>
    <property type="evidence" value="ECO:0007669"/>
    <property type="project" value="InterPro"/>
</dbReference>
<dbReference type="GO" id="GO:0051117">
    <property type="term" value="F:ATPase binding"/>
    <property type="evidence" value="ECO:0007669"/>
    <property type="project" value="TreeGrafter"/>
</dbReference>
<dbReference type="GO" id="GO:0004252">
    <property type="term" value="F:serine-type endopeptidase activity"/>
    <property type="evidence" value="ECO:0007669"/>
    <property type="project" value="UniProtKB-UniRule"/>
</dbReference>
<dbReference type="GO" id="GO:0006515">
    <property type="term" value="P:protein quality control for misfolded or incompletely synthesized proteins"/>
    <property type="evidence" value="ECO:0007669"/>
    <property type="project" value="TreeGrafter"/>
</dbReference>
<dbReference type="CDD" id="cd07017">
    <property type="entry name" value="S14_ClpP_2"/>
    <property type="match status" value="1"/>
</dbReference>
<dbReference type="FunFam" id="3.90.226.10:FF:000001">
    <property type="entry name" value="ATP-dependent Clp protease proteolytic subunit"/>
    <property type="match status" value="1"/>
</dbReference>
<dbReference type="Gene3D" id="3.90.226.10">
    <property type="entry name" value="2-enoyl-CoA Hydratase, Chain A, domain 1"/>
    <property type="match status" value="1"/>
</dbReference>
<dbReference type="HAMAP" id="MF_00444">
    <property type="entry name" value="ClpP"/>
    <property type="match status" value="1"/>
</dbReference>
<dbReference type="InterPro" id="IPR001907">
    <property type="entry name" value="ClpP"/>
</dbReference>
<dbReference type="InterPro" id="IPR029045">
    <property type="entry name" value="ClpP/crotonase-like_dom_sf"/>
</dbReference>
<dbReference type="InterPro" id="IPR023562">
    <property type="entry name" value="ClpP/TepA"/>
</dbReference>
<dbReference type="InterPro" id="IPR033135">
    <property type="entry name" value="ClpP_His_AS"/>
</dbReference>
<dbReference type="InterPro" id="IPR018215">
    <property type="entry name" value="ClpP_Ser_AS"/>
</dbReference>
<dbReference type="NCBIfam" id="TIGR00493">
    <property type="entry name" value="clpP"/>
    <property type="match status" value="1"/>
</dbReference>
<dbReference type="NCBIfam" id="NF001368">
    <property type="entry name" value="PRK00277.1"/>
    <property type="match status" value="1"/>
</dbReference>
<dbReference type="NCBIfam" id="NF009205">
    <property type="entry name" value="PRK12553.1"/>
    <property type="match status" value="1"/>
</dbReference>
<dbReference type="PANTHER" id="PTHR10381">
    <property type="entry name" value="ATP-DEPENDENT CLP PROTEASE PROTEOLYTIC SUBUNIT"/>
    <property type="match status" value="1"/>
</dbReference>
<dbReference type="PANTHER" id="PTHR10381:SF70">
    <property type="entry name" value="ATP-DEPENDENT CLP PROTEASE PROTEOLYTIC SUBUNIT"/>
    <property type="match status" value="1"/>
</dbReference>
<dbReference type="Pfam" id="PF00574">
    <property type="entry name" value="CLP_protease"/>
    <property type="match status" value="1"/>
</dbReference>
<dbReference type="PRINTS" id="PR00127">
    <property type="entry name" value="CLPPROTEASEP"/>
</dbReference>
<dbReference type="SUPFAM" id="SSF52096">
    <property type="entry name" value="ClpP/crotonase"/>
    <property type="match status" value="1"/>
</dbReference>
<dbReference type="PROSITE" id="PS00382">
    <property type="entry name" value="CLP_PROTEASE_HIS"/>
    <property type="match status" value="1"/>
</dbReference>
<dbReference type="PROSITE" id="PS00381">
    <property type="entry name" value="CLP_PROTEASE_SER"/>
    <property type="match status" value="1"/>
</dbReference>
<evidence type="ECO:0000255" key="1">
    <source>
        <dbReference type="HAMAP-Rule" id="MF_00444"/>
    </source>
</evidence>
<feature type="chain" id="PRO_1000135147" description="ATP-dependent Clp protease proteolytic subunit">
    <location>
        <begin position="1"/>
        <end position="215"/>
    </location>
</feature>
<feature type="active site" description="Nucleophile" evidence="1">
    <location>
        <position position="115"/>
    </location>
</feature>
<feature type="active site" evidence="1">
    <location>
        <position position="140"/>
    </location>
</feature>
<name>CLPP_ANAMF</name>